<feature type="chain" id="PRO_0000077817" description="Uncharacterized protein gp24">
    <location>
        <begin position="1"/>
        <end position="64"/>
    </location>
</feature>
<organismHost>
    <name type="scientific">Enterobacteriaceae</name>
    <dbReference type="NCBI Taxonomy" id="543"/>
</organismHost>
<keyword id="KW-1035">Host cytoplasm</keyword>
<keyword id="KW-0426">Late protein</keyword>
<keyword id="KW-1185">Reference proteome</keyword>
<gene>
    <name type="ordered locus">Mup24</name>
</gene>
<reference key="1">
    <citation type="journal article" date="2002" name="J. Mol. Biol.">
        <title>Bacteriophage Mu genome sequence: analysis and comparison with Mu-like prophages in Haemophilus, Neisseria and Deinococcus.</title>
        <authorList>
            <person name="Morgan G.J."/>
            <person name="Hatfull G.F."/>
            <person name="Casjens S."/>
            <person name="Hendrix R.W."/>
        </authorList>
    </citation>
    <scope>NUCLEOTIDE SEQUENCE [LARGE SCALE GENOMIC DNA]</scope>
</reference>
<reference key="2">
    <citation type="journal article" date="1993" name="Genetics">
        <title>Mutational analysis of a C-dependent late promoter of bacteriophage Mu.</title>
        <authorList>
            <person name="Chiang L.W."/>
            <person name="Howe M.M."/>
        </authorList>
    </citation>
    <scope>INDUCTION</scope>
</reference>
<organism>
    <name type="scientific">Escherichia phage Mu</name>
    <name type="common">Bacteriophage Mu</name>
    <dbReference type="NCBI Taxonomy" id="2681603"/>
    <lineage>
        <taxon>Viruses</taxon>
        <taxon>Duplodnaviria</taxon>
        <taxon>Heunggongvirae</taxon>
        <taxon>Uroviricota</taxon>
        <taxon>Caudoviricetes</taxon>
        <taxon>Muvirus</taxon>
        <taxon>Muvirus mu</taxon>
    </lineage>
</organism>
<evidence type="ECO:0000269" key="1">
    <source>
    </source>
</evidence>
<evidence type="ECO:0000305" key="2"/>
<dbReference type="EMBL" id="AF083977">
    <property type="protein sequence ID" value="AAF01102.1"/>
    <property type="molecule type" value="Genomic_DNA"/>
</dbReference>
<dbReference type="RefSeq" id="NP_050628.1">
    <property type="nucleotide sequence ID" value="NC_000929.1"/>
</dbReference>
<dbReference type="SMR" id="Q9T1X0"/>
<dbReference type="GeneID" id="2636252"/>
<dbReference type="KEGG" id="vg:2636252"/>
<dbReference type="Proteomes" id="UP000002611">
    <property type="component" value="Genome"/>
</dbReference>
<dbReference type="GO" id="GO:0030430">
    <property type="term" value="C:host cell cytoplasm"/>
    <property type="evidence" value="ECO:0007669"/>
    <property type="project" value="UniProtKB-SubCell"/>
</dbReference>
<comment type="subcellular location">
    <subcellularLocation>
        <location evidence="2">Host cytoplasm</location>
    </subcellularLocation>
</comment>
<comment type="induction">
    <text evidence="1">Expressed in the late phase of the viral replicative cycle. Expression of late genes is activated by the viral late transcription activator C.</text>
</comment>
<proteinExistence type="evidence at transcript level"/>
<protein>
    <recommendedName>
        <fullName>Uncharacterized protein gp24</fullName>
    </recommendedName>
    <alternativeName>
        <fullName>Gene product 24</fullName>
        <shortName>gp24</shortName>
    </alternativeName>
</protein>
<accession>Q9T1X0</accession>
<sequence>MNEDQNRAVALLLAELWQGDTRDIPRPAAYDPPVLCAGCGRELRPDVLRQQPMANYCHWCRGAE</sequence>
<name>GP24_BPMU</name>